<reference key="1">
    <citation type="journal article" date="2004" name="J. Mol. Evol.">
        <title>Comparative analysis of the complete plastid genome sequence of the red alga Gracilaria tenuistipitata var. liui provides insights into the evolution of rhodoplasts and their relationship to other plastids.</title>
        <authorList>
            <person name="Hagopian J.C."/>
            <person name="Reis M."/>
            <person name="Kitajima J.P."/>
            <person name="Bhattacharya D."/>
            <person name="de Oliveira M.C."/>
        </authorList>
    </citation>
    <scope>NUCLEOTIDE SEQUENCE [LARGE SCALE GENOMIC DNA]</scope>
</reference>
<sequence>MKNKITVILKKNLANLGSIGTVVKVSSGYAFNYLIPRDFAQLATQGSLKHHKMFLDMKQQKLDEIQDKLQASAQKFNKISKISVKKKVGNNNQIFGSVNDKEIISKLFSITGEKLEKKNIYLPNIKALGIYNLNIIFTSDIQVSMKLQILPFFA</sequence>
<evidence type="ECO:0000255" key="1">
    <source>
        <dbReference type="HAMAP-Rule" id="MF_00503"/>
    </source>
</evidence>
<evidence type="ECO:0000305" key="2"/>
<gene>
    <name evidence="1" type="primary">rpl9</name>
    <name type="ordered locus">Grc000045</name>
</gene>
<comment type="function">
    <text evidence="1">Binds to the 23S rRNA.</text>
</comment>
<comment type="subcellular location">
    <subcellularLocation>
        <location>Plastid</location>
        <location>Chloroplast</location>
    </subcellularLocation>
</comment>
<comment type="similarity">
    <text evidence="1">Belongs to the bacterial ribosomal protein bL9 family.</text>
</comment>
<keyword id="KW-0150">Chloroplast</keyword>
<keyword id="KW-0934">Plastid</keyword>
<keyword id="KW-0687">Ribonucleoprotein</keyword>
<keyword id="KW-0689">Ribosomal protein</keyword>
<keyword id="KW-0694">RNA-binding</keyword>
<keyword id="KW-0699">rRNA-binding</keyword>
<protein>
    <recommendedName>
        <fullName evidence="1">Large ribosomal subunit protein bL9c</fullName>
    </recommendedName>
    <alternativeName>
        <fullName evidence="2">50S ribosomal protein L9, chloroplastic</fullName>
    </alternativeName>
</protein>
<feature type="chain" id="PRO_0000277246" description="Large ribosomal subunit protein bL9c">
    <location>
        <begin position="1"/>
        <end position="154"/>
    </location>
</feature>
<proteinExistence type="inferred from homology"/>
<organism>
    <name type="scientific">Gracilaria tenuistipitata var. liui</name>
    <name type="common">Red alga</name>
    <dbReference type="NCBI Taxonomy" id="285951"/>
    <lineage>
        <taxon>Eukaryota</taxon>
        <taxon>Rhodophyta</taxon>
        <taxon>Florideophyceae</taxon>
        <taxon>Rhodymeniophycidae</taxon>
        <taxon>Gracilariales</taxon>
        <taxon>Gracilariaceae</taxon>
        <taxon>Gracilaria</taxon>
        <taxon>Gracilaria tenuistipitata</taxon>
    </lineage>
</organism>
<geneLocation type="chloroplast"/>
<name>RK9_GRATL</name>
<dbReference type="EMBL" id="AY673996">
    <property type="protein sequence ID" value="AAT79626.1"/>
    <property type="molecule type" value="Genomic_DNA"/>
</dbReference>
<dbReference type="RefSeq" id="YP_063551.1">
    <property type="nucleotide sequence ID" value="NC_006137.1"/>
</dbReference>
<dbReference type="SMR" id="Q6B909"/>
<dbReference type="GeneID" id="2943939"/>
<dbReference type="GO" id="GO:0009507">
    <property type="term" value="C:chloroplast"/>
    <property type="evidence" value="ECO:0007669"/>
    <property type="project" value="UniProtKB-SubCell"/>
</dbReference>
<dbReference type="GO" id="GO:1990904">
    <property type="term" value="C:ribonucleoprotein complex"/>
    <property type="evidence" value="ECO:0007669"/>
    <property type="project" value="UniProtKB-KW"/>
</dbReference>
<dbReference type="GO" id="GO:0005840">
    <property type="term" value="C:ribosome"/>
    <property type="evidence" value="ECO:0007669"/>
    <property type="project" value="UniProtKB-KW"/>
</dbReference>
<dbReference type="GO" id="GO:0019843">
    <property type="term" value="F:rRNA binding"/>
    <property type="evidence" value="ECO:0007669"/>
    <property type="project" value="UniProtKB-UniRule"/>
</dbReference>
<dbReference type="GO" id="GO:0003735">
    <property type="term" value="F:structural constituent of ribosome"/>
    <property type="evidence" value="ECO:0007669"/>
    <property type="project" value="InterPro"/>
</dbReference>
<dbReference type="GO" id="GO:0006412">
    <property type="term" value="P:translation"/>
    <property type="evidence" value="ECO:0007669"/>
    <property type="project" value="UniProtKB-UniRule"/>
</dbReference>
<dbReference type="Gene3D" id="3.10.430.100">
    <property type="entry name" value="Ribosomal protein L9, C-terminal domain"/>
    <property type="match status" value="1"/>
</dbReference>
<dbReference type="Gene3D" id="3.40.5.10">
    <property type="entry name" value="Ribosomal protein L9, N-terminal domain"/>
    <property type="match status" value="1"/>
</dbReference>
<dbReference type="HAMAP" id="MF_00503">
    <property type="entry name" value="Ribosomal_bL9"/>
    <property type="match status" value="1"/>
</dbReference>
<dbReference type="InterPro" id="IPR000244">
    <property type="entry name" value="Ribosomal_bL9"/>
</dbReference>
<dbReference type="InterPro" id="IPR009027">
    <property type="entry name" value="Ribosomal_bL9/RNase_H1_N"/>
</dbReference>
<dbReference type="InterPro" id="IPR020594">
    <property type="entry name" value="Ribosomal_bL9_bac/chp"/>
</dbReference>
<dbReference type="InterPro" id="IPR020069">
    <property type="entry name" value="Ribosomal_bL9_C"/>
</dbReference>
<dbReference type="InterPro" id="IPR036791">
    <property type="entry name" value="Ribosomal_bL9_C_sf"/>
</dbReference>
<dbReference type="InterPro" id="IPR020070">
    <property type="entry name" value="Ribosomal_bL9_N"/>
</dbReference>
<dbReference type="InterPro" id="IPR036935">
    <property type="entry name" value="Ribosomal_bL9_N_sf"/>
</dbReference>
<dbReference type="NCBIfam" id="TIGR00158">
    <property type="entry name" value="L9"/>
    <property type="match status" value="1"/>
</dbReference>
<dbReference type="PANTHER" id="PTHR21368">
    <property type="entry name" value="50S RIBOSOMAL PROTEIN L9"/>
    <property type="match status" value="1"/>
</dbReference>
<dbReference type="Pfam" id="PF03948">
    <property type="entry name" value="Ribosomal_L9_C"/>
    <property type="match status" value="1"/>
</dbReference>
<dbReference type="Pfam" id="PF01281">
    <property type="entry name" value="Ribosomal_L9_N"/>
    <property type="match status" value="1"/>
</dbReference>
<dbReference type="SUPFAM" id="SSF55658">
    <property type="entry name" value="L9 N-domain-like"/>
    <property type="match status" value="1"/>
</dbReference>
<dbReference type="SUPFAM" id="SSF55653">
    <property type="entry name" value="Ribosomal protein L9 C-domain"/>
    <property type="match status" value="1"/>
</dbReference>
<dbReference type="PROSITE" id="PS00651">
    <property type="entry name" value="RIBOSOMAL_L9"/>
    <property type="match status" value="1"/>
</dbReference>
<accession>Q6B909</accession>